<name>ZNUA_PARDP</name>
<organism evidence="9">
    <name type="scientific">Paracoccus denitrificans (strain Pd 1222)</name>
    <dbReference type="NCBI Taxonomy" id="318586"/>
    <lineage>
        <taxon>Bacteria</taxon>
        <taxon>Pseudomonadati</taxon>
        <taxon>Pseudomonadota</taxon>
        <taxon>Alphaproteobacteria</taxon>
        <taxon>Rhodobacterales</taxon>
        <taxon>Paracoccaceae</taxon>
        <taxon>Paracoccus</taxon>
    </lineage>
</organism>
<reference evidence="9" key="1">
    <citation type="submission" date="2006-12" db="EMBL/GenBank/DDBJ databases">
        <title>Complete sequence of chromosome 2 of Paracoccus denitrificans PD1222.</title>
        <authorList>
            <person name="Copeland A."/>
            <person name="Lucas S."/>
            <person name="Lapidus A."/>
            <person name="Barry K."/>
            <person name="Detter J.C."/>
            <person name="Glavina del Rio T."/>
            <person name="Hammon N."/>
            <person name="Israni S."/>
            <person name="Dalin E."/>
            <person name="Tice H."/>
            <person name="Pitluck S."/>
            <person name="Munk A.C."/>
            <person name="Brettin T."/>
            <person name="Bruce D."/>
            <person name="Han C."/>
            <person name="Tapia R."/>
            <person name="Gilna P."/>
            <person name="Schmutz J."/>
            <person name="Larimer F."/>
            <person name="Land M."/>
            <person name="Hauser L."/>
            <person name="Kyrpides N."/>
            <person name="Lykidis A."/>
            <person name="Spiro S."/>
            <person name="Richardson D.J."/>
            <person name="Moir J.W.B."/>
            <person name="Ferguson S.J."/>
            <person name="van Spanning R.J.M."/>
            <person name="Richardson P."/>
        </authorList>
    </citation>
    <scope>NUCLEOTIDE SEQUENCE [LARGE SCALE GENOMIC DNA]</scope>
    <source>
        <strain evidence="9">Pd 1222</strain>
    </source>
</reference>
<reference evidence="7" key="2">
    <citation type="journal article" date="2019" name="Biochemistry">
        <title>Two ABC Transporters and a Periplasmic Metallochaperone Participate in Zinc Acquisition in Paracoccus denitrificans.</title>
        <authorList>
            <person name="Neupane D.P."/>
            <person name="Kumar S."/>
            <person name="Yukl E.T."/>
        </authorList>
    </citation>
    <scope>FUNCTION</scope>
    <scope>SUBUNIT</scope>
    <scope>SUBCELLULAR LOCATION</scope>
    <scope>DISRUPTION PHENOTYPE</scope>
</reference>
<keyword id="KW-1015">Disulfide bond</keyword>
<keyword id="KW-0406">Ion transport</keyword>
<keyword id="KW-0479">Metal-binding</keyword>
<keyword id="KW-0574">Periplasm</keyword>
<keyword id="KW-1185">Reference proteome</keyword>
<keyword id="KW-0732">Signal</keyword>
<keyword id="KW-0813">Transport</keyword>
<keyword id="KW-0862">Zinc</keyword>
<keyword id="KW-0864">Zinc transport</keyword>
<sequence length="326" mass="34690">MIRPSSLVLAAALGTAALPARAEVPRVVTDIPVVGAMVQQVMGDLGQPEILLQAGGDPHSYQLRPSQARSLQDADLLIWVGPELTPWLERAATSLSAQSEMLALLDLPATHRRDYAGGEHEHEHEHEHEHEHEHEHDGHGHAEEQAHHDHDHSGTDPHAWLDPANGQAWLAGIAETLSRHDPDNAGVYAANAAKAADEIAALDEELKSALTPTQGKRFVVFHDAYGYFTEHYGLEPAIAVSLGDASTPSAARLRAIRDEIAEEGAVCAFPEANHDPKLIAAVIEGSEIRQGAALDPEGTGATPGAGLYAELLRGMGQALADCLGAD</sequence>
<protein>
    <recommendedName>
        <fullName evidence="7">High-affinity zinc uptake system protein ZnuA</fullName>
    </recommendedName>
</protein>
<dbReference type="EMBL" id="CP000490">
    <property type="protein sequence ID" value="ABL72204.1"/>
    <property type="molecule type" value="Genomic_DNA"/>
</dbReference>
<dbReference type="RefSeq" id="WP_011750370.1">
    <property type="nucleotide sequence ID" value="NC_008687.1"/>
</dbReference>
<dbReference type="SMR" id="A1B9L0"/>
<dbReference type="STRING" id="318586.Pden_4140"/>
<dbReference type="EnsemblBacteria" id="ABL72204">
    <property type="protein sequence ID" value="ABL72204"/>
    <property type="gene ID" value="Pden_4140"/>
</dbReference>
<dbReference type="KEGG" id="pde:Pden_4140"/>
<dbReference type="eggNOG" id="COG4531">
    <property type="taxonomic scope" value="Bacteria"/>
</dbReference>
<dbReference type="HOGENOM" id="CLU_016838_1_2_5"/>
<dbReference type="OrthoDB" id="7346865at2"/>
<dbReference type="Proteomes" id="UP000000361">
    <property type="component" value="Chromosome 2"/>
</dbReference>
<dbReference type="GO" id="GO:0042597">
    <property type="term" value="C:periplasmic space"/>
    <property type="evidence" value="ECO:0007669"/>
    <property type="project" value="UniProtKB-SubCell"/>
</dbReference>
<dbReference type="GO" id="GO:0046872">
    <property type="term" value="F:metal ion binding"/>
    <property type="evidence" value="ECO:0007669"/>
    <property type="project" value="UniProtKB-KW"/>
</dbReference>
<dbReference type="GO" id="GO:0006829">
    <property type="term" value="P:zinc ion transport"/>
    <property type="evidence" value="ECO:0007669"/>
    <property type="project" value="UniProtKB-KW"/>
</dbReference>
<dbReference type="Gene3D" id="3.40.50.1980">
    <property type="entry name" value="Nitrogenase molybdenum iron protein domain"/>
    <property type="match status" value="3"/>
</dbReference>
<dbReference type="InterPro" id="IPR050492">
    <property type="entry name" value="Bact_metal-bind_prot9"/>
</dbReference>
<dbReference type="InterPro" id="IPR006127">
    <property type="entry name" value="ZnuA-like"/>
</dbReference>
<dbReference type="PANTHER" id="PTHR42953:SF3">
    <property type="entry name" value="HIGH-AFFINITY ZINC UPTAKE SYSTEM PROTEIN ZNUA"/>
    <property type="match status" value="1"/>
</dbReference>
<dbReference type="PANTHER" id="PTHR42953">
    <property type="entry name" value="HIGH-AFFINITY ZINC UPTAKE SYSTEM PROTEIN ZNUA-RELATED"/>
    <property type="match status" value="1"/>
</dbReference>
<dbReference type="Pfam" id="PF01297">
    <property type="entry name" value="ZnuA"/>
    <property type="match status" value="1"/>
</dbReference>
<dbReference type="SUPFAM" id="SSF53807">
    <property type="entry name" value="Helical backbone' metal receptor"/>
    <property type="match status" value="1"/>
</dbReference>
<gene>
    <name evidence="6" type="primary">znuA</name>
    <name evidence="8" type="ordered locus">Pden_4140</name>
</gene>
<accession>A1B9L0</accession>
<proteinExistence type="evidence at protein level"/>
<comment type="function">
    <text evidence="5">Part of the ATP-binding cassette (ABC) transport system ZnuABC involved in zinc import (PubMed:30353723). Binds zinc with high affinity and specificity and delivers it to the membrane permease for translocation into the cytoplasm (PubMed:30353723).</text>
</comment>
<comment type="subunit">
    <text evidence="5">Monomer.</text>
</comment>
<comment type="subcellular location">
    <subcellularLocation>
        <location evidence="5">Periplasm</location>
    </subcellularLocation>
</comment>
<comment type="disruption phenotype">
    <text evidence="5">No effect on growth and no effect on zinc cellular level in zinc repleted media (PubMed:30353723). In zinc limited media, growth is reduced in an aztC mutant background and also in an aztC and aztD mutant background (PubMed:30353723). In zinc depleted media, zinc cellular levels are reduced in an aztC mutant background and in an aztC and aztD mutant background (PubMed:30353723).</text>
</comment>
<comment type="similarity">
    <text evidence="7">Belongs to the bacterial solute-binding protein 9 family.</text>
</comment>
<evidence type="ECO:0000250" key="1">
    <source>
        <dbReference type="UniProtKB" id="P39172"/>
    </source>
</evidence>
<evidence type="ECO:0000250" key="2">
    <source>
        <dbReference type="UniProtKB" id="P96116"/>
    </source>
</evidence>
<evidence type="ECO:0000255" key="3"/>
<evidence type="ECO:0000256" key="4">
    <source>
        <dbReference type="SAM" id="MobiDB-lite"/>
    </source>
</evidence>
<evidence type="ECO:0000269" key="5">
    <source>
    </source>
</evidence>
<evidence type="ECO:0000303" key="6">
    <source>
    </source>
</evidence>
<evidence type="ECO:0000305" key="7"/>
<evidence type="ECO:0000312" key="8">
    <source>
        <dbReference type="EMBL" id="ABL72204.1"/>
    </source>
</evidence>
<evidence type="ECO:0000312" key="9">
    <source>
        <dbReference type="Proteomes" id="UP000000361"/>
    </source>
</evidence>
<feature type="signal peptide" evidence="3">
    <location>
        <begin position="1"/>
        <end position="22"/>
    </location>
</feature>
<feature type="chain" id="PRO_5002632794" description="High-affinity zinc uptake system protein ZnuA" evidence="3">
    <location>
        <begin position="23"/>
        <end position="326"/>
    </location>
</feature>
<feature type="region of interest" description="Disordered" evidence="4">
    <location>
        <begin position="117"/>
        <end position="161"/>
    </location>
</feature>
<feature type="compositionally biased region" description="Basic and acidic residues" evidence="4">
    <location>
        <begin position="117"/>
        <end position="155"/>
    </location>
</feature>
<feature type="binding site" evidence="1">
    <location>
        <position position="59"/>
    </location>
    <ligand>
        <name>Zn(2+)</name>
        <dbReference type="ChEBI" id="CHEBI:29105"/>
    </ligand>
</feature>
<feature type="binding site" evidence="1">
    <location>
        <position position="158"/>
    </location>
    <ligand>
        <name>Zn(2+)</name>
        <dbReference type="ChEBI" id="CHEBI:29105"/>
    </ligand>
</feature>
<feature type="binding site" evidence="1">
    <location>
        <position position="222"/>
    </location>
    <ligand>
        <name>Zn(2+)</name>
        <dbReference type="ChEBI" id="CHEBI:29105"/>
    </ligand>
</feature>
<feature type="binding site" evidence="2">
    <location>
        <position position="295"/>
    </location>
    <ligand>
        <name>Zn(2+)</name>
        <dbReference type="ChEBI" id="CHEBI:29105"/>
    </ligand>
</feature>
<feature type="disulfide bond" evidence="1">
    <location>
        <begin position="267"/>
        <end position="322"/>
    </location>
</feature>